<dbReference type="EMBL" id="CR857143">
    <property type="protein sequence ID" value="CAH89445.1"/>
    <property type="molecule type" value="mRNA"/>
</dbReference>
<dbReference type="RefSeq" id="NP_001124618.1">
    <property type="nucleotide sequence ID" value="NM_001131146.2"/>
</dbReference>
<dbReference type="SMR" id="Q5RFL2"/>
<dbReference type="FunCoup" id="Q5RFL2">
    <property type="interactions" value="558"/>
</dbReference>
<dbReference type="STRING" id="9601.ENSPPYP00000014462"/>
<dbReference type="Ensembl" id="ENSPPYT00000048861.1">
    <property type="protein sequence ID" value="ENSPPYP00000029762.1"/>
    <property type="gene ID" value="ENSPPYG00000037033.1"/>
</dbReference>
<dbReference type="GeneID" id="100171455"/>
<dbReference type="KEGG" id="pon:100171455"/>
<dbReference type="CTD" id="518"/>
<dbReference type="eggNOG" id="KOG3025">
    <property type="taxonomic scope" value="Eukaryota"/>
</dbReference>
<dbReference type="GeneTree" id="ENSGT00940000154298"/>
<dbReference type="HOGENOM" id="CLU_116822_1_0_1"/>
<dbReference type="InParanoid" id="Q5RFL2"/>
<dbReference type="OMA" id="PAKMFAC"/>
<dbReference type="OrthoDB" id="438052at2759"/>
<dbReference type="TreeFam" id="TF300140"/>
<dbReference type="Proteomes" id="UP000001595">
    <property type="component" value="Chromosome 2B"/>
</dbReference>
<dbReference type="GO" id="GO:0031966">
    <property type="term" value="C:mitochondrial membrane"/>
    <property type="evidence" value="ECO:0007669"/>
    <property type="project" value="UniProtKB-SubCell"/>
</dbReference>
<dbReference type="GO" id="GO:0045259">
    <property type="term" value="C:proton-transporting ATP synthase complex"/>
    <property type="evidence" value="ECO:0007669"/>
    <property type="project" value="UniProtKB-KW"/>
</dbReference>
<dbReference type="GO" id="GO:0033177">
    <property type="term" value="C:proton-transporting two-sector ATPase complex, proton-transporting domain"/>
    <property type="evidence" value="ECO:0007669"/>
    <property type="project" value="InterPro"/>
</dbReference>
<dbReference type="GO" id="GO:0008289">
    <property type="term" value="F:lipid binding"/>
    <property type="evidence" value="ECO:0007669"/>
    <property type="project" value="UniProtKB-KW"/>
</dbReference>
<dbReference type="GO" id="GO:0015078">
    <property type="term" value="F:proton transmembrane transporter activity"/>
    <property type="evidence" value="ECO:0007669"/>
    <property type="project" value="InterPro"/>
</dbReference>
<dbReference type="GO" id="GO:0015986">
    <property type="term" value="P:proton motive force-driven ATP synthesis"/>
    <property type="evidence" value="ECO:0007669"/>
    <property type="project" value="InterPro"/>
</dbReference>
<dbReference type="CDD" id="cd18182">
    <property type="entry name" value="ATP-synt_Fo_c_ATP5G3"/>
    <property type="match status" value="1"/>
</dbReference>
<dbReference type="FunFam" id="1.20.20.10:FF:000003">
    <property type="entry name" value="Atp synthase f complex subunit mitochondrial"/>
    <property type="match status" value="1"/>
</dbReference>
<dbReference type="Gene3D" id="1.20.20.10">
    <property type="entry name" value="F1F0 ATP synthase subunit C"/>
    <property type="match status" value="1"/>
</dbReference>
<dbReference type="HAMAP" id="MF_01396">
    <property type="entry name" value="ATP_synth_c_bact"/>
    <property type="match status" value="1"/>
</dbReference>
<dbReference type="InterPro" id="IPR000454">
    <property type="entry name" value="ATP_synth_F0_csu"/>
</dbReference>
<dbReference type="InterPro" id="IPR020537">
    <property type="entry name" value="ATP_synth_F0_csu_DDCD_BS"/>
</dbReference>
<dbReference type="InterPro" id="IPR038662">
    <property type="entry name" value="ATP_synth_F0_csu_sf"/>
</dbReference>
<dbReference type="InterPro" id="IPR002379">
    <property type="entry name" value="ATPase_proteolipid_c-like_dom"/>
</dbReference>
<dbReference type="InterPro" id="IPR035921">
    <property type="entry name" value="F/V-ATP_Csub_sf"/>
</dbReference>
<dbReference type="PANTHER" id="PTHR10031">
    <property type="entry name" value="ATP SYNTHASE LIPID-BINDING PROTEIN, MITOCHONDRIAL"/>
    <property type="match status" value="1"/>
</dbReference>
<dbReference type="PANTHER" id="PTHR10031:SF0">
    <property type="entry name" value="ATPASE PROTEIN 9"/>
    <property type="match status" value="1"/>
</dbReference>
<dbReference type="Pfam" id="PF00137">
    <property type="entry name" value="ATP-synt_C"/>
    <property type="match status" value="1"/>
</dbReference>
<dbReference type="PRINTS" id="PR00124">
    <property type="entry name" value="ATPASEC"/>
</dbReference>
<dbReference type="SUPFAM" id="SSF81333">
    <property type="entry name" value="F1F0 ATP synthase subunit C"/>
    <property type="match status" value="1"/>
</dbReference>
<dbReference type="PROSITE" id="PS00605">
    <property type="entry name" value="ATPASE_C"/>
    <property type="match status" value="1"/>
</dbReference>
<feature type="transit peptide" description="Mitochondrion" evidence="1">
    <location>
        <begin position="1"/>
        <end position="67"/>
    </location>
</feature>
<feature type="chain" id="PRO_0000002569" description="ATP synthase F(0) complex subunit C3, mitochondrial">
    <location>
        <begin position="68"/>
        <end position="142"/>
    </location>
</feature>
<feature type="transmembrane region" description="Helical" evidence="3">
    <location>
        <begin position="83"/>
        <end position="103"/>
    </location>
</feature>
<feature type="transmembrane region" description="Helical" evidence="3">
    <location>
        <begin position="118"/>
        <end position="138"/>
    </location>
</feature>
<feature type="site" description="Reversibly protonated during proton transport" evidence="1">
    <location>
        <position position="125"/>
    </location>
</feature>
<feature type="modified residue" description="N6,N6,N6-trimethyllysine" evidence="2">
    <location>
        <position position="110"/>
    </location>
</feature>
<comment type="function">
    <text>Mitochondrial membrane ATP synthase (F(1)F(0) ATP synthase or Complex V) produces ATP from ADP in the presence of a proton gradient across the membrane which is generated by electron transport complexes of the respiratory chain. F-type ATPases consist of two structural domains, F(1) - containing the extramembraneous catalytic core and F(0) - containing the membrane proton channel, linked together by a central stalk and a peripheral stalk. During catalysis, ATP synthesis in the catalytic domain of F(1) is coupled via a rotary mechanism of the central stalk subunits to proton translocation. Part of the complex F(0) domain. A homomeric c-ring of probably 10 subunits is part of the complex rotary element.</text>
</comment>
<comment type="subunit">
    <text evidence="2">F-type ATPases have 2 components, CF(1) - the catalytic core - and CF(0) - the membrane proton channel. CF(1) has five subunits: alpha(3), beta(3), gamma(1), delta(1), epsilon(1). CF(0) has three main subunits: a, b and c. Interacts with TMEM70 and TMEM242 (By similarity).</text>
</comment>
<comment type="subcellular location">
    <subcellularLocation>
        <location evidence="1">Mitochondrion membrane</location>
        <topology evidence="1">Multi-pass membrane protein</topology>
    </subcellularLocation>
</comment>
<comment type="PTM">
    <text evidence="2">Trimethylated by ATPSCKMT at Lys-110. Methylation is required for proper incorporation of the C subunit into the ATP synthase complex and mitochondrial respiration.</text>
</comment>
<comment type="disease">
    <text>This protein is the major protein stored in the storage bodies of animals or humans affected with ceroid lipofuscinosis (Batten disease).</text>
</comment>
<comment type="miscellaneous">
    <text evidence="4">There are three genes which encode the mitochondrial ATP synthase proteolipid and they specify precursors with different import sequences but identical mature proteins.</text>
</comment>
<comment type="similarity">
    <text evidence="4">Belongs to the ATPase C chain family.</text>
</comment>
<sequence length="142" mass="14663">MFACAKLACTPSLIRAGSRVAYRPISASVLSRPEASRTGEGSAVFNGAQNGVSQLIQREFQTSAISRDIDTAAKFIGAGAATVGVAGSGAGIGTVFGSLIIGYARNPSLKQQLFSYAILGFALSEAMGLFCLMVAFLILFAM</sequence>
<evidence type="ECO:0000250" key="1"/>
<evidence type="ECO:0000250" key="2">
    <source>
        <dbReference type="UniProtKB" id="P48201"/>
    </source>
</evidence>
<evidence type="ECO:0000255" key="3"/>
<evidence type="ECO:0000305" key="4"/>
<name>AT5G3_PONAB</name>
<accession>Q5RFL2</accession>
<proteinExistence type="evidence at transcript level"/>
<organism>
    <name type="scientific">Pongo abelii</name>
    <name type="common">Sumatran orangutan</name>
    <name type="synonym">Pongo pygmaeus abelii</name>
    <dbReference type="NCBI Taxonomy" id="9601"/>
    <lineage>
        <taxon>Eukaryota</taxon>
        <taxon>Metazoa</taxon>
        <taxon>Chordata</taxon>
        <taxon>Craniata</taxon>
        <taxon>Vertebrata</taxon>
        <taxon>Euteleostomi</taxon>
        <taxon>Mammalia</taxon>
        <taxon>Eutheria</taxon>
        <taxon>Euarchontoglires</taxon>
        <taxon>Primates</taxon>
        <taxon>Haplorrhini</taxon>
        <taxon>Catarrhini</taxon>
        <taxon>Hominidae</taxon>
        <taxon>Pongo</taxon>
    </lineage>
</organism>
<gene>
    <name evidence="2" type="primary">ATP5MC3</name>
    <name type="synonym">ATP5G3</name>
</gene>
<reference key="1">
    <citation type="submission" date="2004-11" db="EMBL/GenBank/DDBJ databases">
        <authorList>
            <consortium name="The German cDNA consortium"/>
        </authorList>
    </citation>
    <scope>NUCLEOTIDE SEQUENCE [LARGE SCALE MRNA]</scope>
    <source>
        <tissue>Kidney</tissue>
    </source>
</reference>
<keyword id="KW-0138">CF(0)</keyword>
<keyword id="KW-0375">Hydrogen ion transport</keyword>
<keyword id="KW-0406">Ion transport</keyword>
<keyword id="KW-0446">Lipid-binding</keyword>
<keyword id="KW-0472">Membrane</keyword>
<keyword id="KW-0488">Methylation</keyword>
<keyword id="KW-0496">Mitochondrion</keyword>
<keyword id="KW-1185">Reference proteome</keyword>
<keyword id="KW-0809">Transit peptide</keyword>
<keyword id="KW-0812">Transmembrane</keyword>
<keyword id="KW-1133">Transmembrane helix</keyword>
<keyword id="KW-0813">Transport</keyword>
<protein>
    <recommendedName>
        <fullName evidence="4">ATP synthase F(0) complex subunit C3, mitochondrial</fullName>
    </recommendedName>
    <alternativeName>
        <fullName>ATP synthase lipid-binding protein</fullName>
    </alternativeName>
    <alternativeName>
        <fullName evidence="2">ATP synthase membrane subunit c locus 3</fullName>
    </alternativeName>
    <alternativeName>
        <fullName>ATP synthase proteolipid P3</fullName>
    </alternativeName>
    <alternativeName>
        <fullName>ATPase protein 9</fullName>
    </alternativeName>
    <alternativeName>
        <fullName>ATPase subunit c</fullName>
    </alternativeName>
</protein>